<reference key="1">
    <citation type="journal article" date="2009" name="PLoS Genet.">
        <title>Organised genome dynamics in the Escherichia coli species results in highly diverse adaptive paths.</title>
        <authorList>
            <person name="Touchon M."/>
            <person name="Hoede C."/>
            <person name="Tenaillon O."/>
            <person name="Barbe V."/>
            <person name="Baeriswyl S."/>
            <person name="Bidet P."/>
            <person name="Bingen E."/>
            <person name="Bonacorsi S."/>
            <person name="Bouchier C."/>
            <person name="Bouvet O."/>
            <person name="Calteau A."/>
            <person name="Chiapello H."/>
            <person name="Clermont O."/>
            <person name="Cruveiller S."/>
            <person name="Danchin A."/>
            <person name="Diard M."/>
            <person name="Dossat C."/>
            <person name="Karoui M.E."/>
            <person name="Frapy E."/>
            <person name="Garry L."/>
            <person name="Ghigo J.M."/>
            <person name="Gilles A.M."/>
            <person name="Johnson J."/>
            <person name="Le Bouguenec C."/>
            <person name="Lescat M."/>
            <person name="Mangenot S."/>
            <person name="Martinez-Jehanne V."/>
            <person name="Matic I."/>
            <person name="Nassif X."/>
            <person name="Oztas S."/>
            <person name="Petit M.A."/>
            <person name="Pichon C."/>
            <person name="Rouy Z."/>
            <person name="Ruf C.S."/>
            <person name="Schneider D."/>
            <person name="Tourret J."/>
            <person name="Vacherie B."/>
            <person name="Vallenet D."/>
            <person name="Medigue C."/>
            <person name="Rocha E.P.C."/>
            <person name="Denamur E."/>
        </authorList>
    </citation>
    <scope>NUCLEOTIDE SEQUENCE [LARGE SCALE GENOMIC DNA]</scope>
    <source>
        <strain>S88 / ExPEC</strain>
    </source>
</reference>
<feature type="chain" id="PRO_1000201568" description="PhoP/PhoQ regulator MgrB">
    <location>
        <begin position="1"/>
        <end position="47"/>
    </location>
</feature>
<feature type="transmembrane region" description="Helical" evidence="1">
    <location>
        <begin position="6"/>
        <end position="26"/>
    </location>
</feature>
<organism>
    <name type="scientific">Escherichia coli O45:K1 (strain S88 / ExPEC)</name>
    <dbReference type="NCBI Taxonomy" id="585035"/>
    <lineage>
        <taxon>Bacteria</taxon>
        <taxon>Pseudomonadati</taxon>
        <taxon>Pseudomonadota</taxon>
        <taxon>Gammaproteobacteria</taxon>
        <taxon>Enterobacterales</taxon>
        <taxon>Enterobacteriaceae</taxon>
        <taxon>Escherichia</taxon>
    </lineage>
</organism>
<sequence length="47" mass="5524">MKKFRWVALVVVVLACLLLWAQVFNMMCDQDVQFFSGICALNQFIPW</sequence>
<gene>
    <name evidence="1" type="primary">mgrB</name>
    <name type="ordered locus">ECS88_1878</name>
</gene>
<name>MGRB_ECO45</name>
<protein>
    <recommendedName>
        <fullName evidence="1">PhoP/PhoQ regulator MgrB</fullName>
    </recommendedName>
</protein>
<comment type="function">
    <text evidence="1">PhoP-regulated transcription is redox-sensitive, being activated when the periplasm becomes more reducing. MgrB acts between DsbA/DsbB and PhoP/PhoQ in this pathway. Represses PhoP/PhoQ signaling, possibly by binding to the periplasmic domain of PhoQ, altering its activity and that of downstream effector PhoP.</text>
</comment>
<comment type="subunit">
    <text evidence="1">May form homooligomers. Probably interacts with the periplasmic domain of PhoQ.</text>
</comment>
<comment type="subcellular location">
    <subcellularLocation>
        <location evidence="1">Cell inner membrane</location>
        <topology evidence="1">Single-pass membrane protein</topology>
    </subcellularLocation>
</comment>
<comment type="similarity">
    <text evidence="1">Belongs to the MgrB family.</text>
</comment>
<keyword id="KW-0997">Cell inner membrane</keyword>
<keyword id="KW-1003">Cell membrane</keyword>
<keyword id="KW-0472">Membrane</keyword>
<keyword id="KW-1185">Reference proteome</keyword>
<keyword id="KW-0812">Transmembrane</keyword>
<keyword id="KW-1133">Transmembrane helix</keyword>
<accession>B7MBN2</accession>
<dbReference type="EMBL" id="CU928161">
    <property type="protein sequence ID" value="CAR03184.1"/>
    <property type="molecule type" value="Genomic_DNA"/>
</dbReference>
<dbReference type="RefSeq" id="WP_000714545.1">
    <property type="nucleotide sequence ID" value="NC_011742.1"/>
</dbReference>
<dbReference type="KEGG" id="ecz:ECS88_1878"/>
<dbReference type="HOGENOM" id="CLU_208030_1_0_6"/>
<dbReference type="Proteomes" id="UP000000747">
    <property type="component" value="Chromosome"/>
</dbReference>
<dbReference type="GO" id="GO:0005886">
    <property type="term" value="C:plasma membrane"/>
    <property type="evidence" value="ECO:0007669"/>
    <property type="project" value="UniProtKB-SubCell"/>
</dbReference>
<dbReference type="GO" id="GO:0070298">
    <property type="term" value="P:negative regulation of phosphorelay signal transduction system"/>
    <property type="evidence" value="ECO:0007669"/>
    <property type="project" value="UniProtKB-UniRule"/>
</dbReference>
<dbReference type="HAMAP" id="MF_01596">
    <property type="entry name" value="MgrB"/>
    <property type="match status" value="1"/>
</dbReference>
<dbReference type="InterPro" id="IPR020907">
    <property type="entry name" value="MgrB"/>
</dbReference>
<dbReference type="NCBIfam" id="NF007635">
    <property type="entry name" value="PRK10299.1"/>
    <property type="match status" value="1"/>
</dbReference>
<dbReference type="Pfam" id="PF13998">
    <property type="entry name" value="MgrB"/>
    <property type="match status" value="1"/>
</dbReference>
<dbReference type="PROSITE" id="PS51257">
    <property type="entry name" value="PROKAR_LIPOPROTEIN"/>
    <property type="match status" value="1"/>
</dbReference>
<evidence type="ECO:0000255" key="1">
    <source>
        <dbReference type="HAMAP-Rule" id="MF_01596"/>
    </source>
</evidence>
<proteinExistence type="inferred from homology"/>